<dbReference type="EMBL" id="CP001140">
    <property type="protein sequence ID" value="ACL11489.1"/>
    <property type="molecule type" value="Genomic_DNA"/>
</dbReference>
<dbReference type="RefSeq" id="WP_012608830.1">
    <property type="nucleotide sequence ID" value="NC_011766.1"/>
</dbReference>
<dbReference type="SMR" id="B8D5V8"/>
<dbReference type="STRING" id="490899.DKAM_1163"/>
<dbReference type="GeneID" id="7171249"/>
<dbReference type="KEGG" id="dka:DKAM_1163"/>
<dbReference type="eggNOG" id="arCOG04093">
    <property type="taxonomic scope" value="Archaea"/>
</dbReference>
<dbReference type="HOGENOM" id="CLU_060400_0_0_2"/>
<dbReference type="Proteomes" id="UP000006903">
    <property type="component" value="Chromosome"/>
</dbReference>
<dbReference type="GO" id="GO:0022627">
    <property type="term" value="C:cytosolic small ribosomal subunit"/>
    <property type="evidence" value="ECO:0007669"/>
    <property type="project" value="TreeGrafter"/>
</dbReference>
<dbReference type="GO" id="GO:0019843">
    <property type="term" value="F:rRNA binding"/>
    <property type="evidence" value="ECO:0007669"/>
    <property type="project" value="UniProtKB-KW"/>
</dbReference>
<dbReference type="GO" id="GO:0003735">
    <property type="term" value="F:structural constituent of ribosome"/>
    <property type="evidence" value="ECO:0007669"/>
    <property type="project" value="InterPro"/>
</dbReference>
<dbReference type="GO" id="GO:0006412">
    <property type="term" value="P:translation"/>
    <property type="evidence" value="ECO:0007669"/>
    <property type="project" value="UniProtKB-UniRule"/>
</dbReference>
<dbReference type="CDD" id="cd06087">
    <property type="entry name" value="KOW_RPS4"/>
    <property type="match status" value="1"/>
</dbReference>
<dbReference type="CDD" id="cd00165">
    <property type="entry name" value="S4"/>
    <property type="match status" value="1"/>
</dbReference>
<dbReference type="FunFam" id="3.10.290.10:FF:000002">
    <property type="entry name" value="40S ribosomal protein S4"/>
    <property type="match status" value="1"/>
</dbReference>
<dbReference type="Gene3D" id="2.30.30.30">
    <property type="match status" value="1"/>
</dbReference>
<dbReference type="Gene3D" id="2.40.50.740">
    <property type="match status" value="1"/>
</dbReference>
<dbReference type="Gene3D" id="3.10.290.10">
    <property type="entry name" value="RNA-binding S4 domain"/>
    <property type="match status" value="1"/>
</dbReference>
<dbReference type="HAMAP" id="MF_00485">
    <property type="entry name" value="Ribosomal_eS4"/>
    <property type="match status" value="1"/>
</dbReference>
<dbReference type="InterPro" id="IPR014722">
    <property type="entry name" value="Rib_uL2_dom2"/>
</dbReference>
<dbReference type="InterPro" id="IPR000876">
    <property type="entry name" value="Ribosomal_eS4"/>
</dbReference>
<dbReference type="InterPro" id="IPR013845">
    <property type="entry name" value="Ribosomal_eS4_central_region"/>
</dbReference>
<dbReference type="InterPro" id="IPR038237">
    <property type="entry name" value="Ribosomal_eS4_central_sf"/>
</dbReference>
<dbReference type="InterPro" id="IPR041982">
    <property type="entry name" value="Ribosomal_eS4_KOW"/>
</dbReference>
<dbReference type="InterPro" id="IPR013843">
    <property type="entry name" value="Ribosomal_eS4_N"/>
</dbReference>
<dbReference type="InterPro" id="IPR002942">
    <property type="entry name" value="S4_RNA-bd"/>
</dbReference>
<dbReference type="InterPro" id="IPR036986">
    <property type="entry name" value="S4_RNA-bd_sf"/>
</dbReference>
<dbReference type="NCBIfam" id="NF003312">
    <property type="entry name" value="PRK04313.1"/>
    <property type="match status" value="1"/>
</dbReference>
<dbReference type="PANTHER" id="PTHR11581">
    <property type="entry name" value="30S/40S RIBOSOMAL PROTEIN S4"/>
    <property type="match status" value="1"/>
</dbReference>
<dbReference type="PANTHER" id="PTHR11581:SF0">
    <property type="entry name" value="SMALL RIBOSOMAL SUBUNIT PROTEIN ES4"/>
    <property type="match status" value="1"/>
</dbReference>
<dbReference type="Pfam" id="PF00900">
    <property type="entry name" value="Ribosomal_S4e"/>
    <property type="match status" value="1"/>
</dbReference>
<dbReference type="Pfam" id="PF08071">
    <property type="entry name" value="RS4NT"/>
    <property type="match status" value="1"/>
</dbReference>
<dbReference type="Pfam" id="PF01479">
    <property type="entry name" value="S4"/>
    <property type="match status" value="1"/>
</dbReference>
<dbReference type="PIRSF" id="PIRSF002116">
    <property type="entry name" value="Ribosomal_S4"/>
    <property type="match status" value="1"/>
</dbReference>
<dbReference type="SMART" id="SM00363">
    <property type="entry name" value="S4"/>
    <property type="match status" value="1"/>
</dbReference>
<dbReference type="SUPFAM" id="SSF55174">
    <property type="entry name" value="Alpha-L RNA-binding motif"/>
    <property type="match status" value="1"/>
</dbReference>
<dbReference type="PROSITE" id="PS50889">
    <property type="entry name" value="S4"/>
    <property type="match status" value="1"/>
</dbReference>
<organism>
    <name type="scientific">Desulfurococcus amylolyticus (strain DSM 18924 / JCM 16383 / VKM B-2413 / 1221n)</name>
    <name type="common">Desulfurococcus kamchatkensis</name>
    <dbReference type="NCBI Taxonomy" id="490899"/>
    <lineage>
        <taxon>Archaea</taxon>
        <taxon>Thermoproteota</taxon>
        <taxon>Thermoprotei</taxon>
        <taxon>Desulfurococcales</taxon>
        <taxon>Desulfurococcaceae</taxon>
        <taxon>Desulfurococcus</taxon>
    </lineage>
</organism>
<gene>
    <name evidence="1" type="primary">rps4e</name>
    <name type="ordered locus">DKAM_1163</name>
</gene>
<proteinExistence type="inferred from homology"/>
<name>RS4E_DESA1</name>
<feature type="chain" id="PRO_1000194356" description="Small ribosomal subunit protein eS4">
    <location>
        <begin position="1"/>
        <end position="252"/>
    </location>
</feature>
<feature type="domain" description="S4 RNA-binding" evidence="1">
    <location>
        <begin position="43"/>
        <end position="106"/>
    </location>
</feature>
<accession>B8D5V8</accession>
<evidence type="ECO:0000255" key="1">
    <source>
        <dbReference type="HAMAP-Rule" id="MF_00485"/>
    </source>
</evidence>
<evidence type="ECO:0000305" key="2"/>
<sequence>MGSMGGSRHLKAINAPRYWPILRKEYRWVVKSSPGPHPISRSLPLLILVRDMLGYAKTGKEARRLIAEGYFKIDGRVRRDYKFPVGVMDVIEIVGVNKYYRVIPVPTKVLGLIEISREEASFKLCRIENKTTVKNGHIQLNLHDGRNVLIRVNDPRNPVEDTYDTLGVLKLSIPVQQILDYVPLKEGVIAIVSGGRNVGRVGKIVSIHKGMRRYRSIVTLEDKQGNKFQTSLDYIFPIGVEKPLIKLPEGAW</sequence>
<protein>
    <recommendedName>
        <fullName evidence="1">Small ribosomal subunit protein eS4</fullName>
    </recommendedName>
    <alternativeName>
        <fullName evidence="2">30S ribosomal protein S4e</fullName>
    </alternativeName>
</protein>
<keyword id="KW-0687">Ribonucleoprotein</keyword>
<keyword id="KW-0689">Ribosomal protein</keyword>
<keyword id="KW-0694">RNA-binding</keyword>
<keyword id="KW-0699">rRNA-binding</keyword>
<reference key="1">
    <citation type="journal article" date="2009" name="J. Bacteriol.">
        <title>Complete genome sequence of the anaerobic, protein-degrading hyperthermophilic crenarchaeon Desulfurococcus kamchatkensis.</title>
        <authorList>
            <person name="Ravin N.V."/>
            <person name="Mardanov A.V."/>
            <person name="Beletsky A.V."/>
            <person name="Kublanov I.V."/>
            <person name="Kolganova T.V."/>
            <person name="Lebedinsky A.V."/>
            <person name="Chernyh N.A."/>
            <person name="Bonch-Osmolovskaya E.A."/>
            <person name="Skryabin K.G."/>
        </authorList>
    </citation>
    <scope>NUCLEOTIDE SEQUENCE [LARGE SCALE GENOMIC DNA]</scope>
    <source>
        <strain>DSM 18924 / JCM 16383 / VKM B-2413 / 1221n</strain>
    </source>
</reference>
<comment type="similarity">
    <text evidence="1">Belongs to the eukaryotic ribosomal protein eS4 family.</text>
</comment>